<reference key="1">
    <citation type="journal article" date="2014" name="Stand. Genomic Sci.">
        <title>Complete genome sequence of Anabaena variabilis ATCC 29413.</title>
        <authorList>
            <person name="Thiel T."/>
            <person name="Pratte B.S."/>
            <person name="Zhong J."/>
            <person name="Goodwin L."/>
            <person name="Copeland A."/>
            <person name="Lucas S."/>
            <person name="Han C."/>
            <person name="Pitluck S."/>
            <person name="Land M.L."/>
            <person name="Kyrpides N.C."/>
            <person name="Woyke T."/>
        </authorList>
    </citation>
    <scope>NUCLEOTIDE SEQUENCE [LARGE SCALE GENOMIC DNA]</scope>
    <source>
        <strain>ATCC 29413 / PCC 7937</strain>
    </source>
</reference>
<evidence type="ECO:0000255" key="1">
    <source>
        <dbReference type="HAMAP-Rule" id="MF_00523"/>
    </source>
</evidence>
<sequence length="349" mass="37341">MKFSDIISKLEVTNYSLTQNPNNDPEITGMAAIDEATSGTLSYIEGAKFASFIAKTNASALILPQNEAMQAQAQERGIVWMATPEPRLLFAKAIALFYQPYTPTPEIHPTAVIHPTAKIGNDVYIGPHVVIQPGVEIGNGVIIHPNVVIYPGVKIGDRTILHANCTIEERSQIGADCVIHSGAVIGGEGFGFVPTRTGWYKMEQSGYVVLEDRVDIGCNTTIDRPSVGETRVGYDTKIDNLVQIAHGCQIGAGCAIAAQTGMAGGVKLGNRVILAGQVGIANQAKMGDGSTASAQTGILHDVKPGEVVSGTPAIPHKMYLKIAALYSRLPDMYQAFRQSQRQLEEEGKR</sequence>
<comment type="function">
    <text evidence="1">Catalyzes the N-acylation of UDP-3-O-acylglucosamine using 3-hydroxyacyl-ACP as the acyl donor. Is involved in the biosynthesis of lipid A, a phosphorylated glycolipid that anchors the lipopolysaccharide to the outer membrane of the cell.</text>
</comment>
<comment type="catalytic activity">
    <reaction evidence="1">
        <text>a UDP-3-O-[(3R)-3-hydroxyacyl]-alpha-D-glucosamine + a (3R)-hydroxyacyl-[ACP] = a UDP-2-N,3-O-bis[(3R)-3-hydroxyacyl]-alpha-D-glucosamine + holo-[ACP] + H(+)</text>
        <dbReference type="Rhea" id="RHEA:53836"/>
        <dbReference type="Rhea" id="RHEA-COMP:9685"/>
        <dbReference type="Rhea" id="RHEA-COMP:9945"/>
        <dbReference type="ChEBI" id="CHEBI:15378"/>
        <dbReference type="ChEBI" id="CHEBI:64479"/>
        <dbReference type="ChEBI" id="CHEBI:78827"/>
        <dbReference type="ChEBI" id="CHEBI:137740"/>
        <dbReference type="ChEBI" id="CHEBI:137748"/>
        <dbReference type="EC" id="2.3.1.191"/>
    </reaction>
</comment>
<comment type="pathway">
    <text evidence="1">Bacterial outer membrane biogenesis; LPS lipid A biosynthesis.</text>
</comment>
<comment type="subunit">
    <text evidence="1">Homotrimer.</text>
</comment>
<comment type="similarity">
    <text evidence="1">Belongs to the transferase hexapeptide repeat family. LpxD subfamily.</text>
</comment>
<name>LPXD_TRIV2</name>
<gene>
    <name evidence="1" type="primary">lpxD</name>
    <name type="ordered locus">Ava_0837</name>
</gene>
<accession>Q3MEX5</accession>
<protein>
    <recommendedName>
        <fullName evidence="1">UDP-3-O-acylglucosamine N-acyltransferase</fullName>
        <ecNumber evidence="1">2.3.1.191</ecNumber>
    </recommendedName>
</protein>
<dbReference type="EC" id="2.3.1.191" evidence="1"/>
<dbReference type="EMBL" id="CP000117">
    <property type="protein sequence ID" value="ABA20461.1"/>
    <property type="molecule type" value="Genomic_DNA"/>
</dbReference>
<dbReference type="SMR" id="Q3MEX5"/>
<dbReference type="STRING" id="240292.Ava_0837"/>
<dbReference type="DNASU" id="3681855"/>
<dbReference type="KEGG" id="ava:Ava_0837"/>
<dbReference type="eggNOG" id="COG1044">
    <property type="taxonomic scope" value="Bacteria"/>
</dbReference>
<dbReference type="HOGENOM" id="CLU_049865_0_0_3"/>
<dbReference type="UniPathway" id="UPA00973"/>
<dbReference type="Proteomes" id="UP000002533">
    <property type="component" value="Chromosome"/>
</dbReference>
<dbReference type="GO" id="GO:0031470">
    <property type="term" value="C:carboxysome"/>
    <property type="evidence" value="ECO:0007669"/>
    <property type="project" value="UniProtKB-ARBA"/>
</dbReference>
<dbReference type="GO" id="GO:0016020">
    <property type="term" value="C:membrane"/>
    <property type="evidence" value="ECO:0007669"/>
    <property type="project" value="GOC"/>
</dbReference>
<dbReference type="GO" id="GO:0016410">
    <property type="term" value="F:N-acyltransferase activity"/>
    <property type="evidence" value="ECO:0007669"/>
    <property type="project" value="InterPro"/>
</dbReference>
<dbReference type="GO" id="GO:0043886">
    <property type="term" value="F:structural constituent of carboxysome shell"/>
    <property type="evidence" value="ECO:0007669"/>
    <property type="project" value="UniProtKB-ARBA"/>
</dbReference>
<dbReference type="GO" id="GO:0009245">
    <property type="term" value="P:lipid A biosynthetic process"/>
    <property type="evidence" value="ECO:0007669"/>
    <property type="project" value="UniProtKB-UniRule"/>
</dbReference>
<dbReference type="CDD" id="cd03352">
    <property type="entry name" value="LbH_LpxD"/>
    <property type="match status" value="1"/>
</dbReference>
<dbReference type="Gene3D" id="2.160.10.10">
    <property type="entry name" value="Hexapeptide repeat proteins"/>
    <property type="match status" value="1"/>
</dbReference>
<dbReference type="Gene3D" id="3.40.1390.10">
    <property type="entry name" value="MurE/MurF, N-terminal domain"/>
    <property type="match status" value="1"/>
</dbReference>
<dbReference type="HAMAP" id="MF_00523">
    <property type="entry name" value="LpxD"/>
    <property type="match status" value="1"/>
</dbReference>
<dbReference type="InterPro" id="IPR001451">
    <property type="entry name" value="Hexapep"/>
</dbReference>
<dbReference type="InterPro" id="IPR007691">
    <property type="entry name" value="LpxD"/>
</dbReference>
<dbReference type="InterPro" id="IPR011004">
    <property type="entry name" value="Trimer_LpxA-like_sf"/>
</dbReference>
<dbReference type="InterPro" id="IPR020573">
    <property type="entry name" value="UDP_GlcNAc_AcTrfase_non-rep"/>
</dbReference>
<dbReference type="NCBIfam" id="TIGR01853">
    <property type="entry name" value="lipid_A_lpxD"/>
    <property type="match status" value="1"/>
</dbReference>
<dbReference type="NCBIfam" id="NF002060">
    <property type="entry name" value="PRK00892.1"/>
    <property type="match status" value="1"/>
</dbReference>
<dbReference type="PANTHER" id="PTHR43378">
    <property type="entry name" value="UDP-3-O-ACYLGLUCOSAMINE N-ACYLTRANSFERASE"/>
    <property type="match status" value="1"/>
</dbReference>
<dbReference type="PANTHER" id="PTHR43378:SF2">
    <property type="entry name" value="UDP-3-O-ACYLGLUCOSAMINE N-ACYLTRANSFERASE 1, MITOCHONDRIAL-RELATED"/>
    <property type="match status" value="1"/>
</dbReference>
<dbReference type="Pfam" id="PF00132">
    <property type="entry name" value="Hexapep"/>
    <property type="match status" value="1"/>
</dbReference>
<dbReference type="Pfam" id="PF04613">
    <property type="entry name" value="LpxD"/>
    <property type="match status" value="1"/>
</dbReference>
<dbReference type="SUPFAM" id="SSF51161">
    <property type="entry name" value="Trimeric LpxA-like enzymes"/>
    <property type="match status" value="1"/>
</dbReference>
<keyword id="KW-0012">Acyltransferase</keyword>
<keyword id="KW-0441">Lipid A biosynthesis</keyword>
<keyword id="KW-0444">Lipid biosynthesis</keyword>
<keyword id="KW-0443">Lipid metabolism</keyword>
<keyword id="KW-0677">Repeat</keyword>
<keyword id="KW-0808">Transferase</keyword>
<organism>
    <name type="scientific">Trichormus variabilis (strain ATCC 29413 / PCC 7937)</name>
    <name type="common">Anabaena variabilis</name>
    <dbReference type="NCBI Taxonomy" id="240292"/>
    <lineage>
        <taxon>Bacteria</taxon>
        <taxon>Bacillati</taxon>
        <taxon>Cyanobacteriota</taxon>
        <taxon>Cyanophyceae</taxon>
        <taxon>Nostocales</taxon>
        <taxon>Nostocaceae</taxon>
        <taxon>Trichormus</taxon>
    </lineage>
</organism>
<feature type="chain" id="PRO_0000264344" description="UDP-3-O-acylglucosamine N-acyltransferase">
    <location>
        <begin position="1"/>
        <end position="349"/>
    </location>
</feature>
<feature type="active site" description="Proton acceptor" evidence="1">
    <location>
        <position position="246"/>
    </location>
</feature>
<proteinExistence type="inferred from homology"/>